<reference key="1">
    <citation type="journal article" date="2004" name="Proc. Natl. Acad. Sci. U.S.A.">
        <title>Comparison of the genome of the oral pathogen Treponema denticola with other spirochete genomes.</title>
        <authorList>
            <person name="Seshadri R."/>
            <person name="Myers G.S.A."/>
            <person name="Tettelin H."/>
            <person name="Eisen J.A."/>
            <person name="Heidelberg J.F."/>
            <person name="Dodson R.J."/>
            <person name="Davidsen T.M."/>
            <person name="DeBoy R.T."/>
            <person name="Fouts D.E."/>
            <person name="Haft D.H."/>
            <person name="Selengut J."/>
            <person name="Ren Q."/>
            <person name="Brinkac L.M."/>
            <person name="Madupu R."/>
            <person name="Kolonay J.F."/>
            <person name="Durkin S.A."/>
            <person name="Daugherty S.C."/>
            <person name="Shetty J."/>
            <person name="Shvartsbeyn A."/>
            <person name="Gebregeorgis E."/>
            <person name="Geer K."/>
            <person name="Tsegaye G."/>
            <person name="Malek J.A."/>
            <person name="Ayodeji B."/>
            <person name="Shatsman S."/>
            <person name="McLeod M.P."/>
            <person name="Smajs D."/>
            <person name="Howell J.K."/>
            <person name="Pal S."/>
            <person name="Amin A."/>
            <person name="Vashisth P."/>
            <person name="McNeill T.Z."/>
            <person name="Xiang Q."/>
            <person name="Sodergren E."/>
            <person name="Baca E."/>
            <person name="Weinstock G.M."/>
            <person name="Norris S.J."/>
            <person name="Fraser C.M."/>
            <person name="Paulsen I.T."/>
        </authorList>
    </citation>
    <scope>NUCLEOTIDE SEQUENCE [LARGE SCALE GENOMIC DNA]</scope>
    <source>
        <strain>ATCC 35405 / DSM 14222 / CIP 103919 / JCM 8153 / KCTC 15104</strain>
    </source>
</reference>
<sequence length="491" mass="55970">MKIMMVTSELVPFAKVGGLADAVTALSIALAEKRHDVRVVMPRYYKIDRKNLKQIPGAMAVHLGPYEHWVGVYESNLPSSKVKVYFIDHEQAFGRDGVYGSAFEPDFSDNTKRFSLLAHAAFQVCRKQAWIPDVVHAHDWAAGLVPVLLRFTEKNTEFKNTASVFTIHNMGYQGVYSKHTFPDTGLDWNDFYTTGFEDWDRINFLKAALVSSDMLTTVSPSYAEEIKRPEFGFRMDGILRYREKELTGILNGVDTSIWNPSKDEYIPYRYNSKTLEEKEKNKSVLQERFGLEIDISVPVFGMISRLVDQKGISELFGPMYGSAFKICSDIKLQMVVLGSGESWCEKELNFLSQRLPNFRCYIGYNEELSHLIEAGSDFFLMPSRYEPCGLNQMYSLLYGTLPIVRKTGGLADTVENYNEETGEGTGFVLDYLSPQSIYDTVGWAAYAWYNKKDHIKKMRTKAMSKKFGWNIAAEKYLKVYADAIEKKASML</sequence>
<feature type="chain" id="PRO_0000188659" description="Glycogen synthase">
    <location>
        <begin position="1"/>
        <end position="491"/>
    </location>
</feature>
<feature type="binding site" evidence="1">
    <location>
        <position position="15"/>
    </location>
    <ligand>
        <name>ADP-alpha-D-glucose</name>
        <dbReference type="ChEBI" id="CHEBI:57498"/>
    </ligand>
</feature>
<accession>Q73MC7</accession>
<protein>
    <recommendedName>
        <fullName evidence="1">Glycogen synthase</fullName>
        <ecNumber evidence="1">2.4.1.21</ecNumber>
    </recommendedName>
    <alternativeName>
        <fullName evidence="1">Starch [bacterial glycogen] synthase</fullName>
    </alternativeName>
</protein>
<dbReference type="EC" id="2.4.1.21" evidence="1"/>
<dbReference type="EMBL" id="AE017226">
    <property type="protein sequence ID" value="AAS12099.1"/>
    <property type="molecule type" value="Genomic_DNA"/>
</dbReference>
<dbReference type="RefSeq" id="NP_972188.1">
    <property type="nucleotide sequence ID" value="NC_002967.9"/>
</dbReference>
<dbReference type="RefSeq" id="WP_002679256.1">
    <property type="nucleotide sequence ID" value="NC_002967.9"/>
</dbReference>
<dbReference type="SMR" id="Q73MC7"/>
<dbReference type="STRING" id="243275.TDE_1582"/>
<dbReference type="CAZy" id="GT5">
    <property type="family name" value="Glycosyltransferase Family 5"/>
</dbReference>
<dbReference type="PaxDb" id="243275-TDE_1582"/>
<dbReference type="GeneID" id="2739779"/>
<dbReference type="KEGG" id="tde:TDE_1582"/>
<dbReference type="PATRIC" id="fig|243275.7.peg.1512"/>
<dbReference type="eggNOG" id="COG0297">
    <property type="taxonomic scope" value="Bacteria"/>
</dbReference>
<dbReference type="HOGENOM" id="CLU_009583_18_5_12"/>
<dbReference type="OrthoDB" id="9808590at2"/>
<dbReference type="UniPathway" id="UPA00164"/>
<dbReference type="Proteomes" id="UP000008212">
    <property type="component" value="Chromosome"/>
</dbReference>
<dbReference type="GO" id="GO:0009011">
    <property type="term" value="F:alpha-1,4-glucan glucosyltransferase (ADP-glucose donor) activity"/>
    <property type="evidence" value="ECO:0007669"/>
    <property type="project" value="UniProtKB-UniRule"/>
</dbReference>
<dbReference type="GO" id="GO:0004373">
    <property type="term" value="F:alpha-1,4-glucan glucosyltransferase (UDP-glucose donor) activity"/>
    <property type="evidence" value="ECO:0007669"/>
    <property type="project" value="InterPro"/>
</dbReference>
<dbReference type="GO" id="GO:0005978">
    <property type="term" value="P:glycogen biosynthetic process"/>
    <property type="evidence" value="ECO:0007669"/>
    <property type="project" value="UniProtKB-UniRule"/>
</dbReference>
<dbReference type="CDD" id="cd03791">
    <property type="entry name" value="GT5_Glycogen_synthase_DULL1-like"/>
    <property type="match status" value="1"/>
</dbReference>
<dbReference type="Gene3D" id="3.40.50.2000">
    <property type="entry name" value="Glycogen Phosphorylase B"/>
    <property type="match status" value="2"/>
</dbReference>
<dbReference type="HAMAP" id="MF_00484">
    <property type="entry name" value="Glycogen_synth"/>
    <property type="match status" value="1"/>
</dbReference>
<dbReference type="InterPro" id="IPR001296">
    <property type="entry name" value="Glyco_trans_1"/>
</dbReference>
<dbReference type="InterPro" id="IPR011835">
    <property type="entry name" value="GS/SS"/>
</dbReference>
<dbReference type="InterPro" id="IPR013534">
    <property type="entry name" value="Starch_synth_cat_dom"/>
</dbReference>
<dbReference type="NCBIfam" id="TIGR02095">
    <property type="entry name" value="glgA"/>
    <property type="match status" value="1"/>
</dbReference>
<dbReference type="NCBIfam" id="NF001899">
    <property type="entry name" value="PRK00654.1-2"/>
    <property type="match status" value="1"/>
</dbReference>
<dbReference type="PANTHER" id="PTHR45825:SF11">
    <property type="entry name" value="ALPHA AMYLASE DOMAIN-CONTAINING PROTEIN"/>
    <property type="match status" value="1"/>
</dbReference>
<dbReference type="PANTHER" id="PTHR45825">
    <property type="entry name" value="GRANULE-BOUND STARCH SYNTHASE 1, CHLOROPLASTIC/AMYLOPLASTIC"/>
    <property type="match status" value="1"/>
</dbReference>
<dbReference type="Pfam" id="PF08323">
    <property type="entry name" value="Glyco_transf_5"/>
    <property type="match status" value="1"/>
</dbReference>
<dbReference type="Pfam" id="PF00534">
    <property type="entry name" value="Glycos_transf_1"/>
    <property type="match status" value="1"/>
</dbReference>
<dbReference type="SUPFAM" id="SSF53756">
    <property type="entry name" value="UDP-Glycosyltransferase/glycogen phosphorylase"/>
    <property type="match status" value="1"/>
</dbReference>
<evidence type="ECO:0000255" key="1">
    <source>
        <dbReference type="HAMAP-Rule" id="MF_00484"/>
    </source>
</evidence>
<comment type="function">
    <text evidence="1">Synthesizes alpha-1,4-glucan chains using ADP-glucose.</text>
</comment>
<comment type="catalytic activity">
    <reaction evidence="1">
        <text>[(1-&gt;4)-alpha-D-glucosyl](n) + ADP-alpha-D-glucose = [(1-&gt;4)-alpha-D-glucosyl](n+1) + ADP + H(+)</text>
        <dbReference type="Rhea" id="RHEA:18189"/>
        <dbReference type="Rhea" id="RHEA-COMP:9584"/>
        <dbReference type="Rhea" id="RHEA-COMP:9587"/>
        <dbReference type="ChEBI" id="CHEBI:15378"/>
        <dbReference type="ChEBI" id="CHEBI:15444"/>
        <dbReference type="ChEBI" id="CHEBI:57498"/>
        <dbReference type="ChEBI" id="CHEBI:456216"/>
        <dbReference type="EC" id="2.4.1.21"/>
    </reaction>
</comment>
<comment type="pathway">
    <text evidence="1">Glycan biosynthesis; glycogen biosynthesis.</text>
</comment>
<comment type="similarity">
    <text evidence="1">Belongs to the glycosyltransferase 1 family. Bacterial/plant glycogen synthase subfamily.</text>
</comment>
<organism>
    <name type="scientific">Treponema denticola (strain ATCC 35405 / DSM 14222 / CIP 103919 / JCM 8153 / KCTC 15104)</name>
    <dbReference type="NCBI Taxonomy" id="243275"/>
    <lineage>
        <taxon>Bacteria</taxon>
        <taxon>Pseudomonadati</taxon>
        <taxon>Spirochaetota</taxon>
        <taxon>Spirochaetia</taxon>
        <taxon>Spirochaetales</taxon>
        <taxon>Treponemataceae</taxon>
        <taxon>Treponema</taxon>
    </lineage>
</organism>
<proteinExistence type="inferred from homology"/>
<name>GLGA_TREDE</name>
<gene>
    <name evidence="1" type="primary">glgA</name>
    <name type="ordered locus">TDE_1582</name>
</gene>
<keyword id="KW-0320">Glycogen biosynthesis</keyword>
<keyword id="KW-0328">Glycosyltransferase</keyword>
<keyword id="KW-1185">Reference proteome</keyword>
<keyword id="KW-0808">Transferase</keyword>